<feature type="chain" id="PRO_0000241889" description="Orotidine 5'-phosphate decarboxylase">
    <location>
        <begin position="1"/>
        <end position="233"/>
    </location>
</feature>
<feature type="active site" description="Proton donor" evidence="1">
    <location>
        <position position="64"/>
    </location>
</feature>
<feature type="binding site" evidence="1">
    <location>
        <position position="13"/>
    </location>
    <ligand>
        <name>substrate</name>
    </ligand>
</feature>
<feature type="binding site" evidence="1">
    <location>
        <position position="35"/>
    </location>
    <ligand>
        <name>substrate</name>
    </ligand>
</feature>
<feature type="binding site" evidence="1">
    <location>
        <begin position="62"/>
        <end position="71"/>
    </location>
    <ligand>
        <name>substrate</name>
    </ligand>
</feature>
<feature type="binding site" evidence="1">
    <location>
        <position position="122"/>
    </location>
    <ligand>
        <name>substrate</name>
    </ligand>
</feature>
<feature type="binding site" evidence="1">
    <location>
        <position position="182"/>
    </location>
    <ligand>
        <name>substrate</name>
    </ligand>
</feature>
<feature type="binding site" evidence="1">
    <location>
        <position position="191"/>
    </location>
    <ligand>
        <name>substrate</name>
    </ligand>
</feature>
<feature type="binding site" evidence="1">
    <location>
        <position position="211"/>
    </location>
    <ligand>
        <name>substrate</name>
    </ligand>
</feature>
<feature type="binding site" evidence="1">
    <location>
        <position position="212"/>
    </location>
    <ligand>
        <name>substrate</name>
    </ligand>
</feature>
<protein>
    <recommendedName>
        <fullName evidence="1">Orotidine 5'-phosphate decarboxylase</fullName>
        <ecNumber evidence="1">4.1.1.23</ecNumber>
    </recommendedName>
    <alternativeName>
        <fullName evidence="1">OMP decarboxylase</fullName>
        <shortName evidence="1">OMPDCase</shortName>
        <shortName evidence="1">OMPdecase</shortName>
    </alternativeName>
</protein>
<keyword id="KW-0210">Decarboxylase</keyword>
<keyword id="KW-0456">Lyase</keyword>
<keyword id="KW-0665">Pyrimidine biosynthesis</keyword>
<reference key="1">
    <citation type="journal article" date="2005" name="Nat. Biotechnol.">
        <title>Complete genome sequence of the plant commensal Pseudomonas fluorescens Pf-5.</title>
        <authorList>
            <person name="Paulsen I.T."/>
            <person name="Press C.M."/>
            <person name="Ravel J."/>
            <person name="Kobayashi D.Y."/>
            <person name="Myers G.S.A."/>
            <person name="Mavrodi D.V."/>
            <person name="DeBoy R.T."/>
            <person name="Seshadri R."/>
            <person name="Ren Q."/>
            <person name="Madupu R."/>
            <person name="Dodson R.J."/>
            <person name="Durkin A.S."/>
            <person name="Brinkac L.M."/>
            <person name="Daugherty S.C."/>
            <person name="Sullivan S.A."/>
            <person name="Rosovitz M.J."/>
            <person name="Gwinn M.L."/>
            <person name="Zhou L."/>
            <person name="Schneider D.J."/>
            <person name="Cartinhour S.W."/>
            <person name="Nelson W.C."/>
            <person name="Weidman J."/>
            <person name="Watkins K."/>
            <person name="Tran K."/>
            <person name="Khouri H."/>
            <person name="Pierson E.A."/>
            <person name="Pierson L.S. III"/>
            <person name="Thomashow L.S."/>
            <person name="Loper J.E."/>
        </authorList>
    </citation>
    <scope>NUCLEOTIDE SEQUENCE [LARGE SCALE GENOMIC DNA]</scope>
    <source>
        <strain>ATCC BAA-477 / NRRL B-23932 / Pf-5</strain>
    </source>
</reference>
<sequence length="233" mass="24751">MSACQTPIIVALDFPTRDAALKLADQLDPKLCRVKVGKELFTSCAAEIVGTLRDKGFEVFLDLKFHDIPNTTAMAVKAAAEMGVWMVNVHCSGGLRMMAACREVLDQRSGPKPLLIGVTVLTSMEREDLAGIGLDIEPQEQVLRLAALAQKAGMDGLVCSALEAQALKSAHPSLQLVTPGIRPAGSAQDDQRRILTPRQALDAGSDYLVIGRPISQAADPAKALADVVAELAL</sequence>
<gene>
    <name evidence="1" type="primary">pyrF</name>
    <name type="ordered locus">PFL_1754</name>
</gene>
<accession>Q4KFV3</accession>
<proteinExistence type="inferred from homology"/>
<name>PYRF_PSEF5</name>
<evidence type="ECO:0000255" key="1">
    <source>
        <dbReference type="HAMAP-Rule" id="MF_01200"/>
    </source>
</evidence>
<dbReference type="EC" id="4.1.1.23" evidence="1"/>
<dbReference type="EMBL" id="CP000076">
    <property type="protein sequence ID" value="AAY91049.1"/>
    <property type="molecule type" value="Genomic_DNA"/>
</dbReference>
<dbReference type="RefSeq" id="WP_011060084.1">
    <property type="nucleotide sequence ID" value="NC_004129.6"/>
</dbReference>
<dbReference type="SMR" id="Q4KFV3"/>
<dbReference type="STRING" id="220664.PFL_1754"/>
<dbReference type="KEGG" id="pfl:PFL_1754"/>
<dbReference type="PATRIC" id="fig|220664.5.peg.1793"/>
<dbReference type="eggNOG" id="COG0284">
    <property type="taxonomic scope" value="Bacteria"/>
</dbReference>
<dbReference type="HOGENOM" id="CLU_067069_0_0_6"/>
<dbReference type="UniPathway" id="UPA00070">
    <property type="reaction ID" value="UER00120"/>
</dbReference>
<dbReference type="Proteomes" id="UP000008540">
    <property type="component" value="Chromosome"/>
</dbReference>
<dbReference type="GO" id="GO:0005829">
    <property type="term" value="C:cytosol"/>
    <property type="evidence" value="ECO:0007669"/>
    <property type="project" value="TreeGrafter"/>
</dbReference>
<dbReference type="GO" id="GO:0004590">
    <property type="term" value="F:orotidine-5'-phosphate decarboxylase activity"/>
    <property type="evidence" value="ECO:0007669"/>
    <property type="project" value="UniProtKB-UniRule"/>
</dbReference>
<dbReference type="GO" id="GO:0006207">
    <property type="term" value="P:'de novo' pyrimidine nucleobase biosynthetic process"/>
    <property type="evidence" value="ECO:0007669"/>
    <property type="project" value="InterPro"/>
</dbReference>
<dbReference type="GO" id="GO:0044205">
    <property type="term" value="P:'de novo' UMP biosynthetic process"/>
    <property type="evidence" value="ECO:0007669"/>
    <property type="project" value="UniProtKB-UniRule"/>
</dbReference>
<dbReference type="CDD" id="cd04725">
    <property type="entry name" value="OMP_decarboxylase_like"/>
    <property type="match status" value="1"/>
</dbReference>
<dbReference type="FunFam" id="3.20.20.70:FF:000015">
    <property type="entry name" value="Orotidine 5'-phosphate decarboxylase"/>
    <property type="match status" value="1"/>
</dbReference>
<dbReference type="Gene3D" id="3.20.20.70">
    <property type="entry name" value="Aldolase class I"/>
    <property type="match status" value="1"/>
</dbReference>
<dbReference type="HAMAP" id="MF_01200_B">
    <property type="entry name" value="OMPdecase_type1_B"/>
    <property type="match status" value="1"/>
</dbReference>
<dbReference type="InterPro" id="IPR013785">
    <property type="entry name" value="Aldolase_TIM"/>
</dbReference>
<dbReference type="InterPro" id="IPR014732">
    <property type="entry name" value="OMPdecase"/>
</dbReference>
<dbReference type="InterPro" id="IPR018089">
    <property type="entry name" value="OMPdecase_AS"/>
</dbReference>
<dbReference type="InterPro" id="IPR047596">
    <property type="entry name" value="OMPdecase_bac"/>
</dbReference>
<dbReference type="InterPro" id="IPR001754">
    <property type="entry name" value="OMPdeCOase_dom"/>
</dbReference>
<dbReference type="InterPro" id="IPR011060">
    <property type="entry name" value="RibuloseP-bd_barrel"/>
</dbReference>
<dbReference type="NCBIfam" id="NF001273">
    <property type="entry name" value="PRK00230.1"/>
    <property type="match status" value="1"/>
</dbReference>
<dbReference type="NCBIfam" id="TIGR01740">
    <property type="entry name" value="pyrF"/>
    <property type="match status" value="1"/>
</dbReference>
<dbReference type="PANTHER" id="PTHR32119">
    <property type="entry name" value="OROTIDINE 5'-PHOSPHATE DECARBOXYLASE"/>
    <property type="match status" value="1"/>
</dbReference>
<dbReference type="PANTHER" id="PTHR32119:SF2">
    <property type="entry name" value="OROTIDINE 5'-PHOSPHATE DECARBOXYLASE"/>
    <property type="match status" value="1"/>
</dbReference>
<dbReference type="Pfam" id="PF00215">
    <property type="entry name" value="OMPdecase"/>
    <property type="match status" value="1"/>
</dbReference>
<dbReference type="SMART" id="SM00934">
    <property type="entry name" value="OMPdecase"/>
    <property type="match status" value="1"/>
</dbReference>
<dbReference type="SUPFAM" id="SSF51366">
    <property type="entry name" value="Ribulose-phoshate binding barrel"/>
    <property type="match status" value="1"/>
</dbReference>
<dbReference type="PROSITE" id="PS00156">
    <property type="entry name" value="OMPDECASE"/>
    <property type="match status" value="1"/>
</dbReference>
<organism>
    <name type="scientific">Pseudomonas fluorescens (strain ATCC BAA-477 / NRRL B-23932 / Pf-5)</name>
    <dbReference type="NCBI Taxonomy" id="220664"/>
    <lineage>
        <taxon>Bacteria</taxon>
        <taxon>Pseudomonadati</taxon>
        <taxon>Pseudomonadota</taxon>
        <taxon>Gammaproteobacteria</taxon>
        <taxon>Pseudomonadales</taxon>
        <taxon>Pseudomonadaceae</taxon>
        <taxon>Pseudomonas</taxon>
    </lineage>
</organism>
<comment type="function">
    <text evidence="1">Catalyzes the decarboxylation of orotidine 5'-monophosphate (OMP) to uridine 5'-monophosphate (UMP).</text>
</comment>
<comment type="catalytic activity">
    <reaction evidence="1">
        <text>orotidine 5'-phosphate + H(+) = UMP + CO2</text>
        <dbReference type="Rhea" id="RHEA:11596"/>
        <dbReference type="ChEBI" id="CHEBI:15378"/>
        <dbReference type="ChEBI" id="CHEBI:16526"/>
        <dbReference type="ChEBI" id="CHEBI:57538"/>
        <dbReference type="ChEBI" id="CHEBI:57865"/>
        <dbReference type="EC" id="4.1.1.23"/>
    </reaction>
</comment>
<comment type="pathway">
    <text evidence="1">Pyrimidine metabolism; UMP biosynthesis via de novo pathway; UMP from orotate: step 2/2.</text>
</comment>
<comment type="subunit">
    <text evidence="1">Homodimer.</text>
</comment>
<comment type="similarity">
    <text evidence="1">Belongs to the OMP decarboxylase family. Type 1 subfamily.</text>
</comment>